<name>FUT1_SAISC</name>
<organism>
    <name type="scientific">Saimiri sciureus</name>
    <name type="common">Common squirrel monkey</name>
    <dbReference type="NCBI Taxonomy" id="9521"/>
    <lineage>
        <taxon>Eukaryota</taxon>
        <taxon>Metazoa</taxon>
        <taxon>Chordata</taxon>
        <taxon>Craniata</taxon>
        <taxon>Vertebrata</taxon>
        <taxon>Euteleostomi</taxon>
        <taxon>Mammalia</taxon>
        <taxon>Eutheria</taxon>
        <taxon>Euarchontoglires</taxon>
        <taxon>Primates</taxon>
        <taxon>Haplorrhini</taxon>
        <taxon>Platyrrhini</taxon>
        <taxon>Cebidae</taxon>
        <taxon>Saimiriinae</taxon>
        <taxon>Saimiri</taxon>
    </lineage>
</organism>
<accession>Q866F1</accession>
<sequence>MWPRSHRHLCLAFLLVCVLSAISFLIHFHQDSIRHGLGLSVLCPDRRLVTPPVAIFCLPGTPMSPNTSSPCPQHPASLSGTWTIYPDGRFGNQMGQYATLLALAQLNGRRAFILPAMHAALAPVFRITLPVLAPEVDSRTPWQELRLHDWMSEEYADLGDPFLKLSGFPCSWTFFHHLREQIRSEFTLHDHLREEAQSVLRRLRLGRSGARPRTFVGVHVRRGDYLQVMPQRWKGVVANSAYLREAMDWFRARHEAPVFVVTSNGMEWCRENIDASKGDVMFAGDGQEASPWKDFALLAQCNHTIMTIGTFGFWAAYLAGGDTVYLANFTLPDSEFLKIFKPEAAFLPEWVGINADLSPLWPLAEP</sequence>
<evidence type="ECO:0000250" key="1">
    <source>
        <dbReference type="UniProtKB" id="F6Q1T7"/>
    </source>
</evidence>
<evidence type="ECO:0000250" key="2">
    <source>
        <dbReference type="UniProtKB" id="O09160"/>
    </source>
</evidence>
<evidence type="ECO:0000250" key="3">
    <source>
        <dbReference type="UniProtKB" id="P19526"/>
    </source>
</evidence>
<evidence type="ECO:0000255" key="4"/>
<evidence type="ECO:0000305" key="5"/>
<keyword id="KW-0325">Glycoprotein</keyword>
<keyword id="KW-0328">Glycosyltransferase</keyword>
<keyword id="KW-0333">Golgi apparatus</keyword>
<keyword id="KW-0443">Lipid metabolism</keyword>
<keyword id="KW-0472">Membrane</keyword>
<keyword id="KW-0735">Signal-anchor</keyword>
<keyword id="KW-0808">Transferase</keyword>
<keyword id="KW-0812">Transmembrane</keyword>
<keyword id="KW-1133">Transmembrane helix</keyword>
<comment type="function">
    <text evidence="2 3">Catalyzes the transfer of L-fucose, from a guanosine diphosphate-beta-L-fucose, to the terminal galactose residue of glycoconjugates through an alpha(1,2) linkage leading to H antigen synthesis that is an intermediate substrate in the synthesis of ABO blood group antigens. H antigen is essential for maturation of the glomerular layer of the main olfactory bulb, in cell migration and early cell-cell contacts during tumor associated angiogenesis (By similarity). Preferentially fucosylates soluble lactose and to a lesser extent fucosylates glycolipids gangliosides GA1 and GM1a (By similarity).</text>
</comment>
<comment type="catalytic activity">
    <reaction evidence="3">
        <text>a beta-D-galactosyl-(1-&gt;4)-N-acetyl-beta-D-glucosaminyl derivative + GDP-beta-L-fucose = an alpha-L-Fuc-(1-&gt;2)-beta-D-Gal-(1-&gt;4)-beta-D-GlcNAc derivative + GDP + H(+)</text>
        <dbReference type="Rhea" id="RHEA:50668"/>
        <dbReference type="ChEBI" id="CHEBI:15378"/>
        <dbReference type="ChEBI" id="CHEBI:57273"/>
        <dbReference type="ChEBI" id="CHEBI:58189"/>
        <dbReference type="ChEBI" id="CHEBI:133507"/>
        <dbReference type="ChEBI" id="CHEBI:133510"/>
        <dbReference type="EC" id="2.4.1.344"/>
    </reaction>
</comment>
<comment type="catalytic activity">
    <reaction evidence="2">
        <text>a ganglioside GA1 + GDP-beta-L-fucose = a ganglioside Fuc-GA1 + GDP + H(+)</text>
        <dbReference type="Rhea" id="RHEA:48320"/>
        <dbReference type="ChEBI" id="CHEBI:15378"/>
        <dbReference type="ChEBI" id="CHEBI:57273"/>
        <dbReference type="ChEBI" id="CHEBI:58189"/>
        <dbReference type="ChEBI" id="CHEBI:88069"/>
        <dbReference type="ChEBI" id="CHEBI:90262"/>
    </reaction>
    <physiologicalReaction direction="left-to-right" evidence="2">
        <dbReference type="Rhea" id="RHEA:48321"/>
    </physiologicalReaction>
</comment>
<comment type="catalytic activity">
    <reaction evidence="2">
        <text>a beta-D-Gal-(1-&gt;3)-beta-D-GlcNAc-(1-&gt;3)-beta-D-Gal-(1-&gt;4)-beta-D-Glc-(1&lt;-&gt;1')-Cer(d18:1(4E)) + GDP-beta-L-fucose = alpha-L-fucosyl-(1-&gt;2)- beta-D-galactosyl-(1-&gt;3)-N-acetyl-beta-D-glucosaminyl-(1-&gt;3)-beta-D-galactosyl-(1-&gt;4)-beta-D-glucosyl-(1&lt;-&gt;1')-N-acylsphing-4-enine + GDP + H(+)</text>
        <dbReference type="Rhea" id="RHEA:32175"/>
        <dbReference type="ChEBI" id="CHEBI:15378"/>
        <dbReference type="ChEBI" id="CHEBI:17292"/>
        <dbReference type="ChEBI" id="CHEBI:28743"/>
        <dbReference type="ChEBI" id="CHEBI:57273"/>
        <dbReference type="ChEBI" id="CHEBI:58189"/>
        <dbReference type="EC" id="2.4.1.69"/>
    </reaction>
    <physiologicalReaction direction="left-to-right" evidence="2">
        <dbReference type="Rhea" id="RHEA:32176"/>
    </physiologicalReaction>
</comment>
<comment type="catalytic activity">
    <reaction evidence="2">
        <text>a neolactoside nLc4Cer(d18:1(4E)) + GDP-beta-L-fucose = a neolactoside IV(2)-alpha-Fuc-nLc4Cer(d18:1(4E)) + GDP + H(+)</text>
        <dbReference type="Rhea" id="RHEA:48304"/>
        <dbReference type="ChEBI" id="CHEBI:15378"/>
        <dbReference type="ChEBI" id="CHEBI:17006"/>
        <dbReference type="ChEBI" id="CHEBI:28691"/>
        <dbReference type="ChEBI" id="CHEBI:57273"/>
        <dbReference type="ChEBI" id="CHEBI:58189"/>
    </reaction>
    <physiologicalReaction direction="left-to-right" evidence="2">
        <dbReference type="Rhea" id="RHEA:48305"/>
    </physiologicalReaction>
</comment>
<comment type="catalytic activity">
    <reaction evidence="1">
        <text>a ganglioside GM1 + GDP-beta-L-fucose = a ganglioside Fuc-GM1 + GDP + H(+)</text>
        <dbReference type="Rhea" id="RHEA:48292"/>
        <dbReference type="ChEBI" id="CHEBI:15378"/>
        <dbReference type="ChEBI" id="CHEBI:57273"/>
        <dbReference type="ChEBI" id="CHEBI:58189"/>
        <dbReference type="ChEBI" id="CHEBI:82639"/>
        <dbReference type="ChEBI" id="CHEBI:90189"/>
    </reaction>
    <physiologicalReaction direction="left-to-right" evidence="1">
        <dbReference type="Rhea" id="RHEA:48293"/>
    </physiologicalReaction>
</comment>
<comment type="catalytic activity">
    <reaction evidence="1">
        <text>beta-D-galactosyl-(1-&gt;3)-N-acetyl-D-galactosamine + GDP-beta-L-fucose = alpha-L-fucosyl-(1-&gt;2)-beta-D-galactosyl-(1-&gt;3)-N-acetyl-D-galactosamine + GDP + H(+)</text>
        <dbReference type="Rhea" id="RHEA:62964"/>
        <dbReference type="ChEBI" id="CHEBI:15378"/>
        <dbReference type="ChEBI" id="CHEBI:57273"/>
        <dbReference type="ChEBI" id="CHEBI:58189"/>
        <dbReference type="ChEBI" id="CHEBI:84728"/>
        <dbReference type="ChEBI" id="CHEBI:546807"/>
    </reaction>
    <physiologicalReaction direction="left-to-right" evidence="1">
        <dbReference type="Rhea" id="RHEA:62965"/>
    </physiologicalReaction>
</comment>
<comment type="pathway">
    <text evidence="3">Protein modification; protein glycosylation.</text>
</comment>
<comment type="subcellular location">
    <subcellularLocation>
        <location evidence="2">Golgi apparatus</location>
        <location evidence="2">Golgi stack membrane</location>
        <topology evidence="2">Single-pass type II membrane protein</topology>
    </subcellularLocation>
    <text evidence="2">Membrane-bound form in trans cisternae of Golgi.</text>
</comment>
<comment type="similarity">
    <text evidence="5">Belongs to the glycosyltransferase 11 family.</text>
</comment>
<protein>
    <recommendedName>
        <fullName evidence="3">Galactoside alpha-(1,2)-fucosyltransferase 1</fullName>
    </recommendedName>
    <alternativeName>
        <fullName>Alpha(1,2)FT 1</fullName>
    </alternativeName>
    <alternativeName>
        <fullName>Fucosyltransferase 1</fullName>
    </alternativeName>
    <alternativeName>
        <fullName>GDP-L-fucose:beta-D-galactoside 2-alpha-L-fucosyltransferase 1</fullName>
    </alternativeName>
    <alternativeName>
        <fullName evidence="2">Type 1 galactoside alpha-(1,2)-fucosyltransferase FUT1</fullName>
        <ecNumber evidence="2">2.4.1.69</ecNumber>
    </alternativeName>
    <alternativeName>
        <fullName evidence="3">Type 2 galactoside alpha-(1,2)-fucosyltransferase FUT1</fullName>
        <ecNumber evidence="3">2.4.1.344</ecNumber>
    </alternativeName>
</protein>
<feature type="chain" id="PRO_0000149105" description="Galactoside alpha-(1,2)-fucosyltransferase 1">
    <location>
        <begin position="1"/>
        <end position="366"/>
    </location>
</feature>
<feature type="topological domain" description="Cytoplasmic" evidence="4">
    <location>
        <begin position="1"/>
        <end position="8"/>
    </location>
</feature>
<feature type="transmembrane region" description="Helical; Signal-anchor for type II membrane protein" evidence="4">
    <location>
        <begin position="9"/>
        <end position="25"/>
    </location>
</feature>
<feature type="topological domain" description="Lumenal" evidence="4">
    <location>
        <begin position="26"/>
        <end position="366"/>
    </location>
</feature>
<feature type="glycosylation site" description="N-linked (GlcNAc...) asparagine" evidence="4">
    <location>
        <position position="66"/>
    </location>
</feature>
<feature type="glycosylation site" description="N-linked (GlcNAc...) asparagine" evidence="4">
    <location>
        <position position="302"/>
    </location>
</feature>
<feature type="glycosylation site" description="N-linked (GlcNAc...) asparagine" evidence="4">
    <location>
        <position position="328"/>
    </location>
</feature>
<proteinExistence type="inferred from homology"/>
<reference key="1">
    <citation type="submission" date="2003-01" db="EMBL/GenBank/DDBJ databases">
        <title>Molecular evolution of the H (FUT1) gene in New World monkeys (Primates, Platyrrhini): evidence of divergent evolution and purifying selection.</title>
        <authorList>
            <person name="Borges B.N."/>
            <person name="Harada M.L."/>
        </authorList>
    </citation>
    <scope>NUCLEOTIDE SEQUENCE [GENOMIC DNA]</scope>
</reference>
<dbReference type="EC" id="2.4.1.69" evidence="2"/>
<dbReference type="EC" id="2.4.1.344" evidence="3"/>
<dbReference type="EMBL" id="AY219617">
    <property type="protein sequence ID" value="AAO43059.1"/>
    <property type="molecule type" value="Genomic_DNA"/>
</dbReference>
<dbReference type="SMR" id="Q866F1"/>
<dbReference type="CAZy" id="GT11">
    <property type="family name" value="Glycosyltransferase Family 11"/>
</dbReference>
<dbReference type="GlyCosmos" id="Q866F1">
    <property type="glycosylation" value="3 sites, No reported glycans"/>
</dbReference>
<dbReference type="UniPathway" id="UPA00378"/>
<dbReference type="GO" id="GO:0032580">
    <property type="term" value="C:Golgi cisterna membrane"/>
    <property type="evidence" value="ECO:0007669"/>
    <property type="project" value="UniProtKB-SubCell"/>
</dbReference>
<dbReference type="GO" id="GO:0031127">
    <property type="term" value="F:alpha-(1,2)-fucosyltransferase activity"/>
    <property type="evidence" value="ECO:0000250"/>
    <property type="project" value="UniProtKB"/>
</dbReference>
<dbReference type="GO" id="GO:0008107">
    <property type="term" value="F:galactoside 2-alpha-L-fucosyltransferase activity"/>
    <property type="evidence" value="ECO:0007669"/>
    <property type="project" value="UniProtKB-EC"/>
</dbReference>
<dbReference type="GO" id="GO:0005975">
    <property type="term" value="P:carbohydrate metabolic process"/>
    <property type="evidence" value="ECO:0007669"/>
    <property type="project" value="InterPro"/>
</dbReference>
<dbReference type="GO" id="GO:0036065">
    <property type="term" value="P:fucosylation"/>
    <property type="evidence" value="ECO:0000250"/>
    <property type="project" value="UniProtKB"/>
</dbReference>
<dbReference type="GO" id="GO:0006629">
    <property type="term" value="P:lipid metabolic process"/>
    <property type="evidence" value="ECO:0007669"/>
    <property type="project" value="UniProtKB-KW"/>
</dbReference>
<dbReference type="GO" id="GO:0021772">
    <property type="term" value="P:olfactory bulb development"/>
    <property type="evidence" value="ECO:0000250"/>
    <property type="project" value="UniProtKB"/>
</dbReference>
<dbReference type="GO" id="GO:0001954">
    <property type="term" value="P:positive regulation of cell-matrix adhesion"/>
    <property type="evidence" value="ECO:0000250"/>
    <property type="project" value="UniProtKB"/>
</dbReference>
<dbReference type="GO" id="GO:0010595">
    <property type="term" value="P:positive regulation of endothelial cell migration"/>
    <property type="evidence" value="ECO:0000250"/>
    <property type="project" value="UniProtKB"/>
</dbReference>
<dbReference type="GO" id="GO:1904906">
    <property type="term" value="P:positive regulation of endothelial cell-matrix adhesion via fibronectin"/>
    <property type="evidence" value="ECO:0000250"/>
    <property type="project" value="UniProtKB"/>
</dbReference>
<dbReference type="GO" id="GO:1903672">
    <property type="term" value="P:positive regulation of sprouting angiogenesis"/>
    <property type="evidence" value="ECO:0000250"/>
    <property type="project" value="UniProtKB"/>
</dbReference>
<dbReference type="GO" id="GO:0006486">
    <property type="term" value="P:protein glycosylation"/>
    <property type="evidence" value="ECO:0000250"/>
    <property type="project" value="UniProtKB"/>
</dbReference>
<dbReference type="GO" id="GO:0030155">
    <property type="term" value="P:regulation of cell adhesion"/>
    <property type="evidence" value="ECO:0000250"/>
    <property type="project" value="UniProtKB"/>
</dbReference>
<dbReference type="GO" id="GO:0001936">
    <property type="term" value="P:regulation of endothelial cell proliferation"/>
    <property type="evidence" value="ECO:0000250"/>
    <property type="project" value="UniProtKB"/>
</dbReference>
<dbReference type="CDD" id="cd11301">
    <property type="entry name" value="Fut1_Fut2_like"/>
    <property type="match status" value="1"/>
</dbReference>
<dbReference type="InterPro" id="IPR002516">
    <property type="entry name" value="Glyco_trans_11"/>
</dbReference>
<dbReference type="PANTHER" id="PTHR11927">
    <property type="entry name" value="GALACTOSIDE 2-L-FUCOSYLTRANSFERASE"/>
    <property type="match status" value="1"/>
</dbReference>
<dbReference type="PANTHER" id="PTHR11927:SF4">
    <property type="entry name" value="GALACTOSIDE ALPHA-(1,2)-FUCOSYLTRANSFERASE 1"/>
    <property type="match status" value="1"/>
</dbReference>
<dbReference type="Pfam" id="PF01531">
    <property type="entry name" value="Glyco_transf_11"/>
    <property type="match status" value="1"/>
</dbReference>
<gene>
    <name evidence="3" type="primary">FUT1</name>
</gene>